<organism>
    <name type="scientific">Aspergillus fumigatus (strain ATCC MYA-4609 / CBS 101355 / FGSC A1100 / Af293)</name>
    <name type="common">Neosartorya fumigata</name>
    <dbReference type="NCBI Taxonomy" id="330879"/>
    <lineage>
        <taxon>Eukaryota</taxon>
        <taxon>Fungi</taxon>
        <taxon>Dikarya</taxon>
        <taxon>Ascomycota</taxon>
        <taxon>Pezizomycotina</taxon>
        <taxon>Eurotiomycetes</taxon>
        <taxon>Eurotiomycetidae</taxon>
        <taxon>Eurotiales</taxon>
        <taxon>Aspergillaceae</taxon>
        <taxon>Aspergillus</taxon>
        <taxon>Aspergillus subgen. Fumigati</taxon>
    </lineage>
</organism>
<reference key="1">
    <citation type="journal article" date="2005" name="Nature">
        <title>Genomic sequence of the pathogenic and allergenic filamentous fungus Aspergillus fumigatus.</title>
        <authorList>
            <person name="Nierman W.C."/>
            <person name="Pain A."/>
            <person name="Anderson M.J."/>
            <person name="Wortman J.R."/>
            <person name="Kim H.S."/>
            <person name="Arroyo J."/>
            <person name="Berriman M."/>
            <person name="Abe K."/>
            <person name="Archer D.B."/>
            <person name="Bermejo C."/>
            <person name="Bennett J.W."/>
            <person name="Bowyer P."/>
            <person name="Chen D."/>
            <person name="Collins M."/>
            <person name="Coulsen R."/>
            <person name="Davies R."/>
            <person name="Dyer P.S."/>
            <person name="Farman M.L."/>
            <person name="Fedorova N."/>
            <person name="Fedorova N.D."/>
            <person name="Feldblyum T.V."/>
            <person name="Fischer R."/>
            <person name="Fosker N."/>
            <person name="Fraser A."/>
            <person name="Garcia J.L."/>
            <person name="Garcia M.J."/>
            <person name="Goble A."/>
            <person name="Goldman G.H."/>
            <person name="Gomi K."/>
            <person name="Griffith-Jones S."/>
            <person name="Gwilliam R."/>
            <person name="Haas B.J."/>
            <person name="Haas H."/>
            <person name="Harris D.E."/>
            <person name="Horiuchi H."/>
            <person name="Huang J."/>
            <person name="Humphray S."/>
            <person name="Jimenez J."/>
            <person name="Keller N."/>
            <person name="Khouri H."/>
            <person name="Kitamoto K."/>
            <person name="Kobayashi T."/>
            <person name="Konzack S."/>
            <person name="Kulkarni R."/>
            <person name="Kumagai T."/>
            <person name="Lafton A."/>
            <person name="Latge J.-P."/>
            <person name="Li W."/>
            <person name="Lord A."/>
            <person name="Lu C."/>
            <person name="Majoros W.H."/>
            <person name="May G.S."/>
            <person name="Miller B.L."/>
            <person name="Mohamoud Y."/>
            <person name="Molina M."/>
            <person name="Monod M."/>
            <person name="Mouyna I."/>
            <person name="Mulligan S."/>
            <person name="Murphy L.D."/>
            <person name="O'Neil S."/>
            <person name="Paulsen I."/>
            <person name="Penalva M.A."/>
            <person name="Pertea M."/>
            <person name="Price C."/>
            <person name="Pritchard B.L."/>
            <person name="Quail M.A."/>
            <person name="Rabbinowitsch E."/>
            <person name="Rawlins N."/>
            <person name="Rajandream M.A."/>
            <person name="Reichard U."/>
            <person name="Renauld H."/>
            <person name="Robson G.D."/>
            <person name="Rodriguez de Cordoba S."/>
            <person name="Rodriguez-Pena J.M."/>
            <person name="Ronning C.M."/>
            <person name="Rutter S."/>
            <person name="Salzberg S.L."/>
            <person name="Sanchez M."/>
            <person name="Sanchez-Ferrero J.C."/>
            <person name="Saunders D."/>
            <person name="Seeger K."/>
            <person name="Squares R."/>
            <person name="Squares S."/>
            <person name="Takeuchi M."/>
            <person name="Tekaia F."/>
            <person name="Turner G."/>
            <person name="Vazquez de Aldana C.R."/>
            <person name="Weidman J."/>
            <person name="White O."/>
            <person name="Woodward J.R."/>
            <person name="Yu J.-H."/>
            <person name="Fraser C.M."/>
            <person name="Galagan J.E."/>
            <person name="Asai K."/>
            <person name="Machida M."/>
            <person name="Hall N."/>
            <person name="Barrell B.G."/>
            <person name="Denning D.W."/>
        </authorList>
    </citation>
    <scope>NUCLEOTIDE SEQUENCE [LARGE SCALE GENOMIC DNA]</scope>
    <source>
        <strain>ATCC MYA-4609 / CBS 101355 / FGSC A1100 / Af293</strain>
    </source>
</reference>
<reference key="2">
    <citation type="journal article" date="2007" name="Eukaryot. Cell">
        <title>EstB-mediated hydrolysis of the siderophore triacetylfusarinine C optimizes iron uptake of Aspergillus fumigatus.</title>
        <authorList>
            <person name="Kragl C."/>
            <person name="Schrettl M."/>
            <person name="Abt B."/>
            <person name="Sarg B."/>
            <person name="Lindner H.H."/>
            <person name="Haas H."/>
        </authorList>
    </citation>
    <scope>FUNCTION</scope>
    <scope>INDUCTION</scope>
    <scope>DISRUPTION PHENOTYPE</scope>
    <scope>CATALYTIC ACTIVITY</scope>
    <scope>BIOPHYSICOCHEMICAL PROPERTIES</scope>
    <scope>SUBCELLULAR LOCATION</scope>
</reference>
<reference evidence="5 6 7 8 9" key="3">
    <citation type="journal article" date="2018" name="Angew. Chem. Int. Ed.">
        <title>Iron Scavenging in Aspergillus Species: Structural and Biochemical Insights into Fungal Siderophore Esterases.</title>
        <authorList>
            <person name="Ecker F."/>
            <person name="Haas H."/>
            <person name="Groll M."/>
            <person name="Huber E.M."/>
        </authorList>
    </citation>
    <scope>X-RAY CRYSTALLOGRAPHY (1.45 ANGSTROMS) OF 3-292 IN COMPLEX WITH TRIACETYLFUSARININE C</scope>
    <scope>FUNCTION</scope>
    <scope>CATALYTIC ACTIVITY</scope>
    <scope>BIOPHYSICOCHEMICAL PROPERTIES</scope>
    <scope>MUTAGENESIS OF SER-174</scope>
    <scope>DOMAIN</scope>
</reference>
<keyword id="KW-0002">3D-structure</keyword>
<keyword id="KW-0963">Cytoplasm</keyword>
<keyword id="KW-0378">Hydrolase</keyword>
<keyword id="KW-1185">Reference proteome</keyword>
<gene>
    <name evidence="3" type="primary">estB</name>
    <name type="ORF">AFUA_3G03660</name>
</gene>
<evidence type="ECO:0000269" key="1">
    <source>
    </source>
</evidence>
<evidence type="ECO:0000269" key="2">
    <source>
    </source>
</evidence>
<evidence type="ECO:0000303" key="3">
    <source>
    </source>
</evidence>
<evidence type="ECO:0000305" key="4"/>
<evidence type="ECO:0007744" key="5">
    <source>
        <dbReference type="PDB" id="6GUD"/>
    </source>
</evidence>
<evidence type="ECO:0007744" key="6">
    <source>
        <dbReference type="PDB" id="6GUG"/>
    </source>
</evidence>
<evidence type="ECO:0007744" key="7">
    <source>
        <dbReference type="PDB" id="6GUI"/>
    </source>
</evidence>
<evidence type="ECO:0007744" key="8">
    <source>
        <dbReference type="PDB" id="6GUL"/>
    </source>
</evidence>
<evidence type="ECO:0007744" key="9">
    <source>
        <dbReference type="PDB" id="6GUR"/>
    </source>
</evidence>
<evidence type="ECO:0007829" key="10">
    <source>
        <dbReference type="PDB" id="6GUD"/>
    </source>
</evidence>
<evidence type="ECO:0007829" key="11">
    <source>
        <dbReference type="PDB" id="6GUG"/>
    </source>
</evidence>
<protein>
    <recommendedName>
        <fullName evidence="3">Siderophore triacetylfusarinine C esterase</fullName>
        <ecNumber evidence="1 2">3.1.-.-</ecNumber>
    </recommendedName>
</protein>
<name>ESTB_ASPFU</name>
<dbReference type="EC" id="3.1.-.-" evidence="1 2"/>
<dbReference type="EMBL" id="AAHF01000010">
    <property type="protein sequence ID" value="EAL86648.1"/>
    <property type="molecule type" value="Genomic_DNA"/>
</dbReference>
<dbReference type="RefSeq" id="XP_748686.1">
    <property type="nucleotide sequence ID" value="XM_743593.1"/>
</dbReference>
<dbReference type="PDB" id="6GUD">
    <property type="method" value="X-ray"/>
    <property type="resolution" value="1.70 A"/>
    <property type="chains" value="A/B=3-292"/>
</dbReference>
<dbReference type="PDB" id="6GUG">
    <property type="method" value="X-ray"/>
    <property type="resolution" value="1.45 A"/>
    <property type="chains" value="A/B=3-292"/>
</dbReference>
<dbReference type="PDB" id="6GUI">
    <property type="method" value="X-ray"/>
    <property type="resolution" value="1.70 A"/>
    <property type="chains" value="A/B=3-292"/>
</dbReference>
<dbReference type="PDB" id="6GUL">
    <property type="method" value="X-ray"/>
    <property type="resolution" value="2.30 A"/>
    <property type="chains" value="A/B=3-292"/>
</dbReference>
<dbReference type="PDB" id="6GUR">
    <property type="method" value="X-ray"/>
    <property type="resolution" value="2.10 A"/>
    <property type="chains" value="A/B=3-292"/>
</dbReference>
<dbReference type="PDBsum" id="6GUD"/>
<dbReference type="PDBsum" id="6GUG"/>
<dbReference type="PDBsum" id="6GUI"/>
<dbReference type="PDBsum" id="6GUL"/>
<dbReference type="PDBsum" id="6GUR"/>
<dbReference type="SMR" id="Q4WF29"/>
<dbReference type="STRING" id="330879.Q4WF29"/>
<dbReference type="ESTHER" id="aspfu-q4wf29">
    <property type="family name" value="A85-IroE-IroD-Fes-Yiel"/>
</dbReference>
<dbReference type="EnsemblFungi" id="EAL86648">
    <property type="protein sequence ID" value="EAL86648"/>
    <property type="gene ID" value="AFUA_3G03660"/>
</dbReference>
<dbReference type="GeneID" id="3505888"/>
<dbReference type="KEGG" id="afm:AFUA_3G03660"/>
<dbReference type="VEuPathDB" id="FungiDB:Afu3g03660"/>
<dbReference type="eggNOG" id="ENOG502SII4">
    <property type="taxonomic scope" value="Eukaryota"/>
</dbReference>
<dbReference type="HOGENOM" id="CLU_039834_3_0_1"/>
<dbReference type="InParanoid" id="Q4WF29"/>
<dbReference type="OMA" id="QVSWPLH"/>
<dbReference type="OrthoDB" id="446683at2759"/>
<dbReference type="Proteomes" id="UP000002530">
    <property type="component" value="Chromosome 3"/>
</dbReference>
<dbReference type="GO" id="GO:0005737">
    <property type="term" value="C:cytoplasm"/>
    <property type="evidence" value="ECO:0000314"/>
    <property type="project" value="AspGD"/>
</dbReference>
<dbReference type="GO" id="GO:0016788">
    <property type="term" value="F:hydrolase activity, acting on ester bonds"/>
    <property type="evidence" value="ECO:0000315"/>
    <property type="project" value="AspGD"/>
</dbReference>
<dbReference type="GO" id="GO:0033214">
    <property type="term" value="P:siderophore-dependent iron import into cell"/>
    <property type="evidence" value="ECO:0000315"/>
    <property type="project" value="AspGD"/>
</dbReference>
<dbReference type="Gene3D" id="3.40.50.1820">
    <property type="entry name" value="alpha/beta hydrolase"/>
    <property type="match status" value="1"/>
</dbReference>
<dbReference type="InterPro" id="IPR029058">
    <property type="entry name" value="AB_hydrolase_fold"/>
</dbReference>
<dbReference type="InterPro" id="IPR000801">
    <property type="entry name" value="Esterase-like"/>
</dbReference>
<dbReference type="InterPro" id="IPR052558">
    <property type="entry name" value="Siderophore_Hydrolase_D"/>
</dbReference>
<dbReference type="PANTHER" id="PTHR40841">
    <property type="entry name" value="SIDEROPHORE TRIACETYLFUSARININE C ESTERASE"/>
    <property type="match status" value="1"/>
</dbReference>
<dbReference type="PANTHER" id="PTHR40841:SF2">
    <property type="entry name" value="SIDEROPHORE-DEGRADING ESTERASE (EUROFUNG)"/>
    <property type="match status" value="1"/>
</dbReference>
<dbReference type="Pfam" id="PF00756">
    <property type="entry name" value="Esterase"/>
    <property type="match status" value="1"/>
</dbReference>
<dbReference type="SUPFAM" id="SSF53474">
    <property type="entry name" value="alpha/beta-Hydrolases"/>
    <property type="match status" value="1"/>
</dbReference>
<accession>Q4WF29</accession>
<comment type="function">
    <text evidence="1 2">Displays specific triacetylfusarinine C (TAFC) esterase activity but does not hydrolyze fusarinine C, which has the same core structure as TAFC (PubMed:17586718, PubMed:30070018). Hydrolysis optimizes but is not essential for TAFC-mediated iron uptake (PubMed:17586718). Both extra- and intracellular siderophores have been shown to be crucial for the virulence (PubMed:17586718). Subsequent to chelation of iron and uptake, FsC and TAFC are hydrolyzed and the iron is transferred to the metabolism or to the intracellular siderophore ferricrocin (FC) for transport and storage of iron (PubMed:17586718). Hydrolyzes both TAFC and DF-TAFC with equal efficiencies, suggesting that its function might not be restricted to the release of iron from the siderophore but might also include the degradation of the iron-free chelator to protect cells (PubMed:17586718).</text>
</comment>
<comment type="catalytic activity">
    <reaction evidence="1 2">
        <text>triacetylfusarinine C + 3 H2O = 3 N-acetylfusarinine + Fe(3+)</text>
        <dbReference type="Rhea" id="RHEA:82343"/>
        <dbReference type="ChEBI" id="CHEBI:15377"/>
        <dbReference type="ChEBI" id="CHEBI:29034"/>
        <dbReference type="ChEBI" id="CHEBI:60481"/>
        <dbReference type="ChEBI" id="CHEBI:232307"/>
    </reaction>
    <physiologicalReaction direction="left-to-right" evidence="1 2">
        <dbReference type="Rhea" id="RHEA:82344"/>
    </physiologicalReaction>
</comment>
<comment type="biophysicochemical properties">
    <kinetics>
        <KM evidence="2">79.6 uM for triacetylfusarinine C</KM>
        <Vmax evidence="2">0.451 umol/sec/mg enzyme towards triacetylfusarinine C</Vmax>
    </kinetics>
    <phDependence>
        <text evidence="1">Optimum pH is 6.0-7.0.</text>
    </phDependence>
    <temperatureDependence>
        <text evidence="1">Optimum temperature is 25 to 37 degrees Celsius.</text>
    </temperatureDependence>
</comment>
<comment type="subcellular location">
    <subcellularLocation>
        <location evidence="1">Cytoplasm</location>
    </subcellularLocation>
</comment>
<comment type="induction">
    <text evidence="1">Expression is induced during iron deprivation (PubMed:17586718).</text>
</comment>
<comment type="domain">
    <text evidence="2">Ser-174 seems to provide a hub for substrate coordination, potentially playing a decisive role in recognition and selectivity.</text>
</comment>
<comment type="disruption phenotype">
    <text evidence="1">Eliminates TAFC esterase activity and causes increased intracellular accumulation of TAFC and TAFC hydrolysis products (PubMed:17586718). Reduces the intracellular transfer rate of iron from TAFC to DF-FC and delays iron sensing (PubMed:17586718). Causes a decreased radial growth rate under iron-depleted but not iron-replete conditions (PubMed:17586718).</text>
</comment>
<comment type="similarity">
    <text evidence="4">Belongs to the esterase D family.</text>
</comment>
<feature type="chain" id="PRO_0000444421" description="Siderophore triacetylfusarinine C esterase">
    <location>
        <begin position="1"/>
        <end position="292"/>
    </location>
</feature>
<feature type="binding site" evidence="2 9">
    <location>
        <position position="97"/>
    </location>
    <ligand>
        <name>triacetylfusarinine C</name>
        <dbReference type="ChEBI" id="CHEBI:60481"/>
    </ligand>
</feature>
<feature type="binding site" description="covalent" evidence="2 9">
    <location>
        <position position="148"/>
    </location>
    <ligand>
        <name>triacetylfusarinine C</name>
        <dbReference type="ChEBI" id="CHEBI:60481"/>
    </ligand>
</feature>
<feature type="binding site" evidence="2 9">
    <location>
        <position position="149"/>
    </location>
    <ligand>
        <name>triacetylfusarinine C</name>
        <dbReference type="ChEBI" id="CHEBI:60481"/>
    </ligand>
</feature>
<feature type="binding site" evidence="2 9">
    <location>
        <position position="174"/>
    </location>
    <ligand>
        <name>triacetylfusarinine C</name>
        <dbReference type="ChEBI" id="CHEBI:60481"/>
    </ligand>
</feature>
<feature type="binding site" evidence="2 9">
    <location>
        <position position="176"/>
    </location>
    <ligand>
        <name>triacetylfusarinine C</name>
        <dbReference type="ChEBI" id="CHEBI:60481"/>
    </ligand>
</feature>
<feature type="binding site" evidence="2 9">
    <location>
        <position position="267"/>
    </location>
    <ligand>
        <name>triacetylfusarinine C</name>
        <dbReference type="ChEBI" id="CHEBI:60481"/>
    </ligand>
</feature>
<feature type="mutagenesis site" description="Decreases activity towards TAFC significantly, tripling the value of KM and reducing Vmax by 50%." evidence="2">
    <original>S</original>
    <variation>A</variation>
    <location>
        <position position="174"/>
    </location>
</feature>
<feature type="strand" evidence="11">
    <location>
        <begin position="11"/>
        <end position="19"/>
    </location>
</feature>
<feature type="strand" evidence="11">
    <location>
        <begin position="25"/>
        <end position="31"/>
    </location>
</feature>
<feature type="strand" evidence="10">
    <location>
        <begin position="36"/>
        <end position="38"/>
    </location>
</feature>
<feature type="helix" evidence="11">
    <location>
        <begin position="39"/>
        <end position="41"/>
    </location>
</feature>
<feature type="strand" evidence="11">
    <location>
        <begin position="44"/>
        <end position="53"/>
    </location>
</feature>
<feature type="helix" evidence="11">
    <location>
        <begin position="54"/>
        <end position="67"/>
    </location>
</feature>
<feature type="helix" evidence="11">
    <location>
        <begin position="68"/>
        <end position="70"/>
    </location>
</feature>
<feature type="strand" evidence="11">
    <location>
        <begin position="79"/>
        <end position="84"/>
    </location>
</feature>
<feature type="helix" evidence="11">
    <location>
        <begin position="94"/>
        <end position="100"/>
    </location>
</feature>
<feature type="helix" evidence="11">
    <location>
        <begin position="115"/>
        <end position="124"/>
    </location>
</feature>
<feature type="helix" evidence="11">
    <location>
        <begin position="126"/>
        <end position="133"/>
    </location>
</feature>
<feature type="strand" evidence="11">
    <location>
        <begin position="137"/>
        <end position="147"/>
    </location>
</feature>
<feature type="helix" evidence="11">
    <location>
        <begin position="149"/>
        <end position="160"/>
    </location>
</feature>
<feature type="helix" evidence="10">
    <location>
        <begin position="162"/>
        <end position="164"/>
    </location>
</feature>
<feature type="strand" evidence="11">
    <location>
        <begin position="166"/>
        <end position="172"/>
    </location>
</feature>
<feature type="helix" evidence="11">
    <location>
        <begin position="177"/>
        <end position="180"/>
    </location>
</feature>
<feature type="helix" evidence="11">
    <location>
        <begin position="182"/>
        <end position="191"/>
    </location>
</feature>
<feature type="strand" evidence="11">
    <location>
        <begin position="202"/>
        <end position="208"/>
    </location>
</feature>
<feature type="turn" evidence="11">
    <location>
        <begin position="209"/>
        <end position="212"/>
    </location>
</feature>
<feature type="helix" evidence="11">
    <location>
        <begin position="222"/>
        <end position="235"/>
    </location>
</feature>
<feature type="helix" evidence="11">
    <location>
        <begin position="237"/>
        <end position="248"/>
    </location>
</feature>
<feature type="strand" evidence="11">
    <location>
        <begin position="255"/>
        <end position="262"/>
    </location>
</feature>
<feature type="turn" evidence="11">
    <location>
        <begin position="267"/>
        <end position="269"/>
    </location>
</feature>
<feature type="helix" evidence="11">
    <location>
        <begin position="270"/>
        <end position="284"/>
    </location>
</feature>
<sequence>MGDRPTPVPLPNSEQFYLENDRGEPYLIQVSWPLHWEDKQTGRGPLPIIYIVDGNALFLTATEAAWRRAAASHFAGGGIIVAIGYPLKGKLYDARRRSFDLTPPTACAPVGYGGADVFLDFIENSVRPAVQARFPQVSLAREALYGHSYGGLLALHALFTRPQSFDCYIASSPSIWWNSLCILHEAKAFVETKKVSHDQSPSLMVSWGSWEQHPPRWADELLDHYEARKRTAAELRMADNALDLCAMLHGCSRLHALIKTEYEGEDHTSVMSCSVSRGLTMFFEDWPFHQSG</sequence>
<proteinExistence type="evidence at protein level"/>